<proteinExistence type="inferred from homology"/>
<accession>B5YQ93</accession>
<organism>
    <name type="scientific">Escherichia coli O157:H7 (strain EC4115 / EHEC)</name>
    <dbReference type="NCBI Taxonomy" id="444450"/>
    <lineage>
        <taxon>Bacteria</taxon>
        <taxon>Pseudomonadati</taxon>
        <taxon>Pseudomonadota</taxon>
        <taxon>Gammaproteobacteria</taxon>
        <taxon>Enterobacterales</taxon>
        <taxon>Enterobacteriaceae</taxon>
        <taxon>Escherichia</taxon>
    </lineage>
</organism>
<keyword id="KW-0378">Hydrolase</keyword>
<gene>
    <name type="primary">yqfB</name>
    <name type="ordered locus">ECH74115_4192</name>
</gene>
<reference key="1">
    <citation type="journal article" date="2011" name="Proc. Natl. Acad. Sci. U.S.A.">
        <title>Genomic anatomy of Escherichia coli O157:H7 outbreaks.</title>
        <authorList>
            <person name="Eppinger M."/>
            <person name="Mammel M.K."/>
            <person name="Leclerc J.E."/>
            <person name="Ravel J."/>
            <person name="Cebula T.A."/>
        </authorList>
    </citation>
    <scope>NUCLEOTIDE SEQUENCE [LARGE SCALE GENOMIC DNA]</scope>
    <source>
        <strain>EC4115 / EHEC</strain>
    </source>
</reference>
<sequence>MQPNDITFFQRFQDDILAGRKTITIRDESESHFKTGDVLRVGRFEDDGYFCTIEVTATSTVTLDTLTEKHAEQENMTLTELKKVIADIYPGQTQFYVIEFKCL</sequence>
<evidence type="ECO:0000255" key="1"/>
<evidence type="ECO:0000255" key="2">
    <source>
        <dbReference type="HAMAP-Rule" id="MF_00684"/>
    </source>
</evidence>
<feature type="chain" id="PRO_1000131783" description="N(4)-acetylcytidine amidohydrolase">
    <location>
        <begin position="1"/>
        <end position="103"/>
    </location>
</feature>
<feature type="domain" description="ASCH" evidence="1">
    <location>
        <begin position="6"/>
        <end position="101"/>
    </location>
</feature>
<feature type="active site" description="Proton acceptor" evidence="2">
    <location>
        <position position="21"/>
    </location>
</feature>
<feature type="active site" description="Nucleophile" evidence="2">
    <location>
        <position position="24"/>
    </location>
</feature>
<feature type="active site" description="Proton donor" evidence="2">
    <location>
        <position position="74"/>
    </location>
</feature>
<protein>
    <recommendedName>
        <fullName evidence="2">N(4)-acetylcytidine amidohydrolase</fullName>
        <shortName evidence="2">ac4C amidohydrolase</shortName>
        <ecNumber evidence="2">3.5.1.135</ecNumber>
    </recommendedName>
</protein>
<comment type="function">
    <text evidence="2">Catalyzes the hydrolysis of N(4)-acetylcytidine (ac4C).</text>
</comment>
<comment type="catalytic activity">
    <reaction evidence="2">
        <text>N(4)-acetylcytidine + H2O = cytidine + acetate + H(+)</text>
        <dbReference type="Rhea" id="RHEA:62932"/>
        <dbReference type="ChEBI" id="CHEBI:15377"/>
        <dbReference type="ChEBI" id="CHEBI:15378"/>
        <dbReference type="ChEBI" id="CHEBI:17562"/>
        <dbReference type="ChEBI" id="CHEBI:30089"/>
        <dbReference type="ChEBI" id="CHEBI:70989"/>
        <dbReference type="EC" id="3.5.1.135"/>
    </reaction>
</comment>
<comment type="catalytic activity">
    <reaction evidence="2">
        <text>N(4)-acetyl-2'-deoxycytidine + H2O = 2'-deoxycytidine + acetate + H(+)</text>
        <dbReference type="Rhea" id="RHEA:62936"/>
        <dbReference type="ChEBI" id="CHEBI:15377"/>
        <dbReference type="ChEBI" id="CHEBI:15378"/>
        <dbReference type="ChEBI" id="CHEBI:15698"/>
        <dbReference type="ChEBI" id="CHEBI:30089"/>
        <dbReference type="ChEBI" id="CHEBI:146133"/>
        <dbReference type="EC" id="3.5.1.135"/>
    </reaction>
</comment>
<comment type="catalytic activity">
    <reaction evidence="2">
        <text>N(4)-acetylcytosine + H2O = cytosine + acetate + H(+)</text>
        <dbReference type="Rhea" id="RHEA:62940"/>
        <dbReference type="ChEBI" id="CHEBI:15377"/>
        <dbReference type="ChEBI" id="CHEBI:15378"/>
        <dbReference type="ChEBI" id="CHEBI:16040"/>
        <dbReference type="ChEBI" id="CHEBI:30089"/>
        <dbReference type="ChEBI" id="CHEBI:146134"/>
        <dbReference type="EC" id="3.5.1.135"/>
    </reaction>
</comment>
<comment type="similarity">
    <text evidence="2">Belongs to the N(4)-acetylcytidine amidohydrolase family.</text>
</comment>
<dbReference type="EC" id="3.5.1.135" evidence="2"/>
<dbReference type="EMBL" id="CP001164">
    <property type="protein sequence ID" value="ACI37656.1"/>
    <property type="molecule type" value="Genomic_DNA"/>
</dbReference>
<dbReference type="RefSeq" id="WP_001182957.1">
    <property type="nucleotide sequence ID" value="NC_011353.1"/>
</dbReference>
<dbReference type="SMR" id="B5YQ93"/>
<dbReference type="GeneID" id="75173001"/>
<dbReference type="KEGG" id="ecf:ECH74115_4192"/>
<dbReference type="HOGENOM" id="CLU_152586_0_0_6"/>
<dbReference type="GO" id="GO:0005829">
    <property type="term" value="C:cytosol"/>
    <property type="evidence" value="ECO:0007669"/>
    <property type="project" value="TreeGrafter"/>
</dbReference>
<dbReference type="GO" id="GO:0016813">
    <property type="term" value="F:hydrolase activity, acting on carbon-nitrogen (but not peptide) bonds, in linear amidines"/>
    <property type="evidence" value="ECO:0007669"/>
    <property type="project" value="UniProtKB-UniRule"/>
</dbReference>
<dbReference type="GO" id="GO:0106251">
    <property type="term" value="F:N4-acetylcytidine amidohydrolase activity"/>
    <property type="evidence" value="ECO:0007669"/>
    <property type="project" value="RHEA"/>
</dbReference>
<dbReference type="CDD" id="cd06552">
    <property type="entry name" value="ASCH_yqfb_like"/>
    <property type="match status" value="1"/>
</dbReference>
<dbReference type="FunFam" id="2.30.130.30:FF:000001">
    <property type="entry name" value="UPF0267 protein YqfB"/>
    <property type="match status" value="1"/>
</dbReference>
<dbReference type="Gene3D" id="2.30.130.30">
    <property type="entry name" value="Hypothetical protein"/>
    <property type="match status" value="1"/>
</dbReference>
<dbReference type="HAMAP" id="MF_00684">
    <property type="entry name" value="ac4C_amidohydr"/>
    <property type="match status" value="1"/>
</dbReference>
<dbReference type="InterPro" id="IPR008314">
    <property type="entry name" value="AC4CH"/>
</dbReference>
<dbReference type="InterPro" id="IPR007374">
    <property type="entry name" value="ASCH_domain"/>
</dbReference>
<dbReference type="InterPro" id="IPR015947">
    <property type="entry name" value="PUA-like_sf"/>
</dbReference>
<dbReference type="NCBIfam" id="NF003443">
    <property type="entry name" value="PRK04980.1"/>
    <property type="match status" value="1"/>
</dbReference>
<dbReference type="PANTHER" id="PTHR38088">
    <property type="entry name" value="UCP029143 FAMILY PROTEIN"/>
    <property type="match status" value="1"/>
</dbReference>
<dbReference type="PANTHER" id="PTHR38088:SF2">
    <property type="entry name" value="UCP029143 FAMILY PROTEIN"/>
    <property type="match status" value="1"/>
</dbReference>
<dbReference type="Pfam" id="PF04266">
    <property type="entry name" value="ASCH"/>
    <property type="match status" value="1"/>
</dbReference>
<dbReference type="PIRSF" id="PIRSF029143">
    <property type="entry name" value="UCP029143"/>
    <property type="match status" value="1"/>
</dbReference>
<dbReference type="SMART" id="SM01022">
    <property type="entry name" value="ASCH"/>
    <property type="match status" value="1"/>
</dbReference>
<dbReference type="SUPFAM" id="SSF88697">
    <property type="entry name" value="PUA domain-like"/>
    <property type="match status" value="1"/>
</dbReference>
<name>AC4CH_ECO5E</name>